<organism>
    <name type="scientific">Penicillium glabrum</name>
    <name type="common">Penicillium frequentans</name>
    <dbReference type="NCBI Taxonomy" id="69773"/>
    <lineage>
        <taxon>Eukaryota</taxon>
        <taxon>Fungi</taxon>
        <taxon>Dikarya</taxon>
        <taxon>Ascomycota</taxon>
        <taxon>Pezizomycotina</taxon>
        <taxon>Eurotiomycetes</taxon>
        <taxon>Eurotiomycetidae</taxon>
        <taxon>Eurotiales</taxon>
        <taxon>Aspergillaceae</taxon>
        <taxon>Penicillium</taxon>
    </lineage>
</organism>
<evidence type="ECO:0000250" key="1">
    <source>
        <dbReference type="UniProtKB" id="P23704"/>
    </source>
</evidence>
<evidence type="ECO:0000255" key="2"/>
<evidence type="ECO:0000255" key="3">
    <source>
        <dbReference type="PROSITE-ProRule" id="PRU10106"/>
    </source>
</evidence>
<evidence type="ECO:0000269" key="4">
    <source ref="1"/>
</evidence>
<evidence type="ECO:0000303" key="5">
    <source ref="1"/>
</evidence>
<evidence type="ECO:0000305" key="6"/>
<proteinExistence type="evidence at protein level"/>
<keyword id="KW-0020">Allergen</keyword>
<keyword id="KW-0066">ATP synthesis</keyword>
<keyword id="KW-0067">ATP-binding</keyword>
<keyword id="KW-0139">CF(1)</keyword>
<keyword id="KW-0903">Direct protein sequencing</keyword>
<keyword id="KW-0375">Hydrogen ion transport</keyword>
<keyword id="KW-0406">Ion transport</keyword>
<keyword id="KW-0472">Membrane</keyword>
<keyword id="KW-0496">Mitochondrion</keyword>
<keyword id="KW-0999">Mitochondrion inner membrane</keyword>
<keyword id="KW-0547">Nucleotide-binding</keyword>
<keyword id="KW-1278">Translocase</keyword>
<keyword id="KW-0813">Transport</keyword>
<sequence length="114" mass="12033">KVHQVIGAVVDVKFRVPVGAGTLGRIINVTGDPIDERGKIGLFGGAGVGKTKVALVFGQMNEPPGARARFTQAGSEVSALLGRMRGISELGIYPAVDPLDSKSRVQQMLQEYKS</sequence>
<name>ATPB_PENGL</name>
<comment type="function">
    <text>Mitochondrial membrane ATP synthase (F(1)F(0) ATP synthase or Complex V) produces ATP from ADP in the presence of a proton gradient across the membrane which is generated by electron transport complexes of the respiratory chain. F-type ATPases consist of two structural domains, F(1) - containing the extramembraneous catalytic core, and F(0) - containing the membrane proton channel, linked together by a central stalk and a peripheral stalk. During catalysis, ATP synthesis in the catalytic domain of F(1) is coupled via a rotary mechanism of the central stalk subunits to proton translocation. Subunits alpha and beta form the catalytic core in F(1). Rotation of the central stalk against the surrounding alpha(3)beta(3) subunits leads to hydrolysis of ATP in three separate catalytic sites on the beta subunits.</text>
</comment>
<comment type="catalytic activity">
    <reaction evidence="3 6">
        <text>ATP + H2O + 4 H(+)(in) = ADP + phosphate + 5 H(+)(out)</text>
        <dbReference type="Rhea" id="RHEA:57720"/>
        <dbReference type="ChEBI" id="CHEBI:15377"/>
        <dbReference type="ChEBI" id="CHEBI:15378"/>
        <dbReference type="ChEBI" id="CHEBI:30616"/>
        <dbReference type="ChEBI" id="CHEBI:43474"/>
        <dbReference type="ChEBI" id="CHEBI:456216"/>
        <dbReference type="EC" id="7.1.2.2"/>
    </reaction>
</comment>
<comment type="subunit">
    <text evidence="6">F-type ATPases have 2 components, CF(1) - the catalytic core - and CF(0) - the membrane proton channel. CF(1) has five subunits: alpha(3), beta(3), gamma(1), delta(1), epsilon(1). CF(0) has three main subunits: a, b and c.</text>
</comment>
<comment type="subcellular location">
    <subcellularLocation>
        <location evidence="6">Mitochondrion</location>
    </subcellularLocation>
    <subcellularLocation>
        <location evidence="6">Mitochondrion inner membrane</location>
    </subcellularLocation>
    <text evidence="6">Peripheral membrane protein.</text>
</comment>
<comment type="allergen">
    <text evidence="4">Causes an allergic reaction in human. Binds to IgE.</text>
</comment>
<comment type="similarity">
    <text evidence="2">Belongs to the ATPase alpha/beta chains family.</text>
</comment>
<protein>
    <recommendedName>
        <fullName>ATP synthase subunit beta, mitochondrial</fullName>
        <ecNumber>7.1.2.2</ecNumber>
    </recommendedName>
</protein>
<feature type="chain" id="PRO_0000324674" description="ATP synthase subunit beta, mitochondrial">
    <location>
        <begin position="1" status="less than"/>
        <end position="114" status="greater than"/>
    </location>
</feature>
<feature type="binding site" evidence="1">
    <location>
        <begin position="44"/>
        <end position="51"/>
    </location>
    <ligand>
        <name>ATP</name>
        <dbReference type="ChEBI" id="CHEBI:30616"/>
    </ligand>
</feature>
<feature type="non-consecutive residues" evidence="5">
    <location>
        <begin position="14"/>
        <end position="15"/>
    </location>
</feature>
<feature type="non-consecutive residues" evidence="5">
    <location>
        <begin position="38"/>
        <end position="39"/>
    </location>
</feature>
<feature type="non-consecutive residues" evidence="5">
    <location>
        <begin position="51"/>
        <end position="52"/>
    </location>
</feature>
<feature type="non-consecutive residues" evidence="5">
    <location>
        <begin position="68"/>
        <end position="69"/>
    </location>
</feature>
<feature type="non-consecutive residues" evidence="5">
    <location>
        <begin position="84"/>
        <end position="85"/>
    </location>
</feature>
<feature type="non-consecutive residues" evidence="5">
    <location>
        <begin position="103"/>
        <end position="104"/>
    </location>
</feature>
<feature type="non-terminal residue" evidence="5">
    <location>
        <position position="1"/>
    </location>
</feature>
<feature type="non-terminal residue" evidence="5">
    <location>
        <position position="114"/>
    </location>
</feature>
<dbReference type="EC" id="7.1.2.2"/>
<dbReference type="GO" id="GO:0005743">
    <property type="term" value="C:mitochondrial inner membrane"/>
    <property type="evidence" value="ECO:0007669"/>
    <property type="project" value="UniProtKB-SubCell"/>
</dbReference>
<dbReference type="GO" id="GO:0045259">
    <property type="term" value="C:proton-transporting ATP synthase complex"/>
    <property type="evidence" value="ECO:0007669"/>
    <property type="project" value="UniProtKB-KW"/>
</dbReference>
<dbReference type="GO" id="GO:0005524">
    <property type="term" value="F:ATP binding"/>
    <property type="evidence" value="ECO:0007669"/>
    <property type="project" value="UniProtKB-KW"/>
</dbReference>
<dbReference type="GO" id="GO:0006754">
    <property type="term" value="P:ATP biosynthetic process"/>
    <property type="evidence" value="ECO:0007669"/>
    <property type="project" value="UniProtKB-KW"/>
</dbReference>
<dbReference type="GO" id="GO:1902600">
    <property type="term" value="P:proton transmembrane transport"/>
    <property type="evidence" value="ECO:0007669"/>
    <property type="project" value="UniProtKB-KW"/>
</dbReference>
<dbReference type="Gene3D" id="3.40.50.12240">
    <property type="match status" value="1"/>
</dbReference>
<dbReference type="InterPro" id="IPR020003">
    <property type="entry name" value="ATPase_a/bsu_AS"/>
</dbReference>
<dbReference type="InterPro" id="IPR027417">
    <property type="entry name" value="P-loop_NTPase"/>
</dbReference>
<dbReference type="SUPFAM" id="SSF52540">
    <property type="entry name" value="P-loop containing nucleoside triphosphate hydrolases"/>
    <property type="match status" value="1"/>
</dbReference>
<dbReference type="PROSITE" id="PS00152">
    <property type="entry name" value="ATPASE_ALPHA_BETA"/>
    <property type="match status" value="1"/>
</dbReference>
<reference evidence="6" key="1">
    <citation type="submission" date="2008-02" db="UniProtKB">
        <title>Identification of putative allergens from Penicillium glabrum using two-dimensional (2-D) gel electrophoresis immunoblotting approach.</title>
        <authorList>
            <person name="Raquel H."/>
            <person name="Jeno P."/>
            <person name="Moita C."/>
            <person name="Cardoso C."/>
            <person name="Sao Jose H."/>
            <person name="San-Romao V."/>
            <person name="Pinto Ricardo C."/>
            <person name="Oliveira M.M."/>
        </authorList>
    </citation>
    <scope>PROTEIN SEQUENCE</scope>
    <scope>ALLERGEN</scope>
    <source>
        <strain evidence="4">B7</strain>
    </source>
</reference>
<accession>P85446</accession>
<gene>
    <name type="primary">atp2</name>
</gene>